<sequence>MGSVSNQEITEGLPKSLDGTADIHKSDKSVIFQGSGVCKWFNVRMGFGFLTMTKKEGTDLETPLDVFVHQSKLHMEGFRSLKEGESVEFTFKKSSKGLESTQVTGPGGAPCIGSERRPKVKGQQKRRQRGDRCYNCGGLDHHAKECKLPPQPKKCHFCQNPNHMVAQCPEKAMQAANLEDQPITEEQELIPEIME</sequence>
<accession>Q8JHC4</accession>
<gene>
    <name type="primary">lin28a</name>
    <name type="synonym">lin28</name>
</gene>
<dbReference type="EMBL" id="AF521098">
    <property type="protein sequence ID" value="AAM77750.1"/>
    <property type="molecule type" value="mRNA"/>
</dbReference>
<dbReference type="RefSeq" id="NP_001080918.1">
    <property type="nucleotide sequence ID" value="NM_001087449.1"/>
</dbReference>
<dbReference type="RefSeq" id="XP_018103579.1">
    <property type="nucleotide sequence ID" value="XM_018248090.1"/>
</dbReference>
<dbReference type="SMR" id="Q8JHC4"/>
<dbReference type="GeneID" id="387262"/>
<dbReference type="KEGG" id="xla:387262"/>
<dbReference type="AGR" id="Xenbase:XB-GENE-866059"/>
<dbReference type="CTD" id="387262"/>
<dbReference type="Xenbase" id="XB-GENE-866059">
    <property type="gene designation" value="lin28a.S"/>
</dbReference>
<dbReference type="OMA" id="GCAKTED"/>
<dbReference type="OrthoDB" id="422005at2759"/>
<dbReference type="Proteomes" id="UP000186698">
    <property type="component" value="Chromosome 2S"/>
</dbReference>
<dbReference type="Bgee" id="387262">
    <property type="expression patterns" value="Expressed in gastrula and 2 other cell types or tissues"/>
</dbReference>
<dbReference type="GO" id="GO:0005737">
    <property type="term" value="C:cytoplasm"/>
    <property type="evidence" value="ECO:0000250"/>
    <property type="project" value="UniProtKB"/>
</dbReference>
<dbReference type="GO" id="GO:0010494">
    <property type="term" value="C:cytoplasmic stress granule"/>
    <property type="evidence" value="ECO:0000250"/>
    <property type="project" value="UniProtKB"/>
</dbReference>
<dbReference type="GO" id="GO:0005730">
    <property type="term" value="C:nucleolus"/>
    <property type="evidence" value="ECO:0007669"/>
    <property type="project" value="UniProtKB-SubCell"/>
</dbReference>
<dbReference type="GO" id="GO:0005634">
    <property type="term" value="C:nucleus"/>
    <property type="evidence" value="ECO:0000250"/>
    <property type="project" value="UniProtKB"/>
</dbReference>
<dbReference type="GO" id="GO:0000932">
    <property type="term" value="C:P-body"/>
    <property type="evidence" value="ECO:0000250"/>
    <property type="project" value="UniProtKB"/>
</dbReference>
<dbReference type="GO" id="GO:0005791">
    <property type="term" value="C:rough endoplasmic reticulum"/>
    <property type="evidence" value="ECO:0007669"/>
    <property type="project" value="UniProtKB-SubCell"/>
</dbReference>
<dbReference type="GO" id="GO:0003729">
    <property type="term" value="F:mRNA binding"/>
    <property type="evidence" value="ECO:0000250"/>
    <property type="project" value="UniProtKB"/>
</dbReference>
<dbReference type="GO" id="GO:0003723">
    <property type="term" value="F:RNA binding"/>
    <property type="evidence" value="ECO:0000250"/>
    <property type="project" value="UniProtKB"/>
</dbReference>
<dbReference type="GO" id="GO:0008270">
    <property type="term" value="F:zinc ion binding"/>
    <property type="evidence" value="ECO:0007669"/>
    <property type="project" value="UniProtKB-KW"/>
</dbReference>
<dbReference type="GO" id="GO:2000767">
    <property type="term" value="P:positive regulation of cytoplasmic translation"/>
    <property type="evidence" value="ECO:0000250"/>
    <property type="project" value="UniProtKB"/>
</dbReference>
<dbReference type="GO" id="GO:0031054">
    <property type="term" value="P:pre-miRNA processing"/>
    <property type="evidence" value="ECO:0000250"/>
    <property type="project" value="UniProtKB"/>
</dbReference>
<dbReference type="GO" id="GO:0019827">
    <property type="term" value="P:stem cell population maintenance"/>
    <property type="evidence" value="ECO:0000250"/>
    <property type="project" value="UniProtKB"/>
</dbReference>
<dbReference type="CDD" id="cd04458">
    <property type="entry name" value="CSP_CDS"/>
    <property type="match status" value="1"/>
</dbReference>
<dbReference type="FunFam" id="4.10.60.10:FF:000007">
    <property type="entry name" value="Protein lin-28 homolog A"/>
    <property type="match status" value="1"/>
</dbReference>
<dbReference type="FunFam" id="2.40.50.140:FF:000087">
    <property type="entry name" value="Protein lin-28 homolog B"/>
    <property type="match status" value="1"/>
</dbReference>
<dbReference type="Gene3D" id="2.40.50.140">
    <property type="entry name" value="Nucleic acid-binding proteins"/>
    <property type="match status" value="1"/>
</dbReference>
<dbReference type="Gene3D" id="4.10.60.10">
    <property type="entry name" value="Zinc finger, CCHC-type"/>
    <property type="match status" value="1"/>
</dbReference>
<dbReference type="InterPro" id="IPR011129">
    <property type="entry name" value="CSD"/>
</dbReference>
<dbReference type="InterPro" id="IPR002059">
    <property type="entry name" value="CSP_DNA-bd"/>
</dbReference>
<dbReference type="InterPro" id="IPR051373">
    <property type="entry name" value="Lin-28_RNA-binding"/>
</dbReference>
<dbReference type="InterPro" id="IPR054081">
    <property type="entry name" value="Lin-28A-like_Znf-CCHC_2"/>
</dbReference>
<dbReference type="InterPro" id="IPR012340">
    <property type="entry name" value="NA-bd_OB-fold"/>
</dbReference>
<dbReference type="InterPro" id="IPR001878">
    <property type="entry name" value="Znf_CCHC"/>
</dbReference>
<dbReference type="InterPro" id="IPR036875">
    <property type="entry name" value="Znf_CCHC_sf"/>
</dbReference>
<dbReference type="PANTHER" id="PTHR46109">
    <property type="entry name" value="PROTEIN LIN-28"/>
    <property type="match status" value="1"/>
</dbReference>
<dbReference type="PANTHER" id="PTHR46109:SF2">
    <property type="entry name" value="PROTEIN LIN-28 HOMOLOG A"/>
    <property type="match status" value="1"/>
</dbReference>
<dbReference type="Pfam" id="PF00313">
    <property type="entry name" value="CSD"/>
    <property type="match status" value="1"/>
</dbReference>
<dbReference type="Pfam" id="PF21890">
    <property type="entry name" value="Lin-28A-like_zf-CCHC_2"/>
    <property type="match status" value="1"/>
</dbReference>
<dbReference type="Pfam" id="PF00098">
    <property type="entry name" value="zf-CCHC"/>
    <property type="match status" value="1"/>
</dbReference>
<dbReference type="PRINTS" id="PR00050">
    <property type="entry name" value="COLDSHOCK"/>
</dbReference>
<dbReference type="SMART" id="SM00357">
    <property type="entry name" value="CSP"/>
    <property type="match status" value="1"/>
</dbReference>
<dbReference type="SMART" id="SM00343">
    <property type="entry name" value="ZnF_C2HC"/>
    <property type="match status" value="2"/>
</dbReference>
<dbReference type="SUPFAM" id="SSF50249">
    <property type="entry name" value="Nucleic acid-binding proteins"/>
    <property type="match status" value="1"/>
</dbReference>
<dbReference type="SUPFAM" id="SSF57756">
    <property type="entry name" value="Retrovirus zinc finger-like domains"/>
    <property type="match status" value="1"/>
</dbReference>
<dbReference type="PROSITE" id="PS51857">
    <property type="entry name" value="CSD_2"/>
    <property type="match status" value="1"/>
</dbReference>
<dbReference type="PROSITE" id="PS50158">
    <property type="entry name" value="ZF_CCHC"/>
    <property type="match status" value="1"/>
</dbReference>
<organism>
    <name type="scientific">Xenopus laevis</name>
    <name type="common">African clawed frog</name>
    <dbReference type="NCBI Taxonomy" id="8355"/>
    <lineage>
        <taxon>Eukaryota</taxon>
        <taxon>Metazoa</taxon>
        <taxon>Chordata</taxon>
        <taxon>Craniata</taxon>
        <taxon>Vertebrata</taxon>
        <taxon>Euteleostomi</taxon>
        <taxon>Amphibia</taxon>
        <taxon>Batrachia</taxon>
        <taxon>Anura</taxon>
        <taxon>Pipoidea</taxon>
        <taxon>Pipidae</taxon>
        <taxon>Xenopodinae</taxon>
        <taxon>Xenopus</taxon>
        <taxon>Xenopus</taxon>
    </lineage>
</organism>
<reference key="1">
    <citation type="journal article" date="2003" name="Dev. Biol.">
        <title>Conservation of the heterochronic regulator Lin-28, its developmental expression and microRNA complementary sites.</title>
        <authorList>
            <person name="Moss E.G."/>
            <person name="Tang L."/>
        </authorList>
    </citation>
    <scope>NUCLEOTIDE SEQUENCE [MRNA]</scope>
    <scope>DEVELOPMENTAL STAGE</scope>
</reference>
<reference key="2">
    <citation type="journal article" date="2003" name="Dev. Biol.">
        <authorList>
            <person name="Moss E.G."/>
            <person name="Tang L."/>
        </authorList>
    </citation>
    <scope>ERRATUM OF PUBMED:12798299</scope>
</reference>
<name>LN28A_XENLA</name>
<evidence type="ECO:0000250" key="1"/>
<evidence type="ECO:0000250" key="2">
    <source>
        <dbReference type="UniProtKB" id="Q8K3Y3"/>
    </source>
</evidence>
<evidence type="ECO:0000250" key="3">
    <source>
        <dbReference type="UniProtKB" id="Q9H9Z2"/>
    </source>
</evidence>
<evidence type="ECO:0000255" key="4">
    <source>
        <dbReference type="PROSITE-ProRule" id="PRU00047"/>
    </source>
</evidence>
<evidence type="ECO:0000256" key="5">
    <source>
        <dbReference type="SAM" id="MobiDB-lite"/>
    </source>
</evidence>
<evidence type="ECO:0000269" key="6">
    <source>
    </source>
</evidence>
<evidence type="ECO:0000305" key="7"/>
<protein>
    <recommendedName>
        <fullName>Protein lin-28 homolog A</fullName>
        <shortName>Lin-28A</shortName>
    </recommendedName>
</protein>
<keyword id="KW-0963">Cytoplasm</keyword>
<keyword id="KW-0256">Endoplasmic reticulum</keyword>
<keyword id="KW-0479">Metal-binding</keyword>
<keyword id="KW-0539">Nucleus</keyword>
<keyword id="KW-1185">Reference proteome</keyword>
<keyword id="KW-0677">Repeat</keyword>
<keyword id="KW-0694">RNA-binding</keyword>
<keyword id="KW-0943">RNA-mediated gene silencing</keyword>
<keyword id="KW-0862">Zinc</keyword>
<keyword id="KW-0863">Zinc-finger</keyword>
<comment type="function">
    <text evidence="2 3">RNA-binding protein that inhibits processing of pre-let-7 miRNAs and regulates translation of mRNAs that control developmental timing, pluripotency and metabolism. Seems to recognize a common structural G-quartet (G4) feature in its miRNA and mRNA targets (By similarity). 'Translational enhancer' that drives specific mRNAs to polysomes and increases the efficiency of protein synthesis. Its association with the translational machinery and target mRNAs results in an increased number of initiation events per molecule of mRNA and, indirectly, in mRNA stabilization. Suppressor of microRNA (miRNA) biogenesis, including that of let-7. Binds specific target miRNA precursors (pre-miRNAs), recognizing an 5'-GGAG-3' motif found in their terminal loop, and recruits uridylyltransferase. This results in the terminal uridylation of target pre-miRNAs. Uridylated pre-miRNAs fail to be processed by Dicer and undergo degradation (By similarity). Localized to the periendoplasmic reticulum area, binds to a large number of spliced mRNAs and inhibits the translation of mRNAs destined for the ER, reducing the synthesis of transmembrane proteins, ER or Golgi lumen proteins, and secretory proteins. Binds to and enhances the translation of mRNAs for several metabolic enzymes, increasing glycolysis and oxidative phosphorylation. Which, with the let-7 repression may enhance tissue repair in adult tissue (By similarity).</text>
</comment>
<comment type="subunit">
    <text evidence="2">Monomer.</text>
</comment>
<comment type="subcellular location">
    <subcellularLocation>
        <location evidence="2">Cytoplasm</location>
    </subcellularLocation>
    <subcellularLocation>
        <location evidence="2">Rough endoplasmic reticulum</location>
    </subcellularLocation>
    <subcellularLocation>
        <location evidence="3">Cytoplasm</location>
        <location evidence="3">P-body</location>
    </subcellularLocation>
    <subcellularLocation>
        <location evidence="2">Cytoplasm</location>
        <location evidence="2">Stress granule</location>
    </subcellularLocation>
    <subcellularLocation>
        <location evidence="2">Nucleus</location>
        <location evidence="2">Nucleolus</location>
    </subcellularLocation>
    <text evidence="2">Predominantly cytoplasmic. In the cytoplasm, localizes to peri-endoplasmic reticulum regions and may be bound to the cytosolic surface of rough endoplasmic reticulum (ER) on which ER-associated mRNAs are translated. Shuttle from the nucleus to the cytoplasm requires RNA-binding.</text>
</comment>
<comment type="developmental stage">
    <text evidence="6">Expressed from mid-gastrula to the tadpole stage. Appears to be largely absent from terminally differentiated cells of the adult.</text>
</comment>
<comment type="domain">
    <text evidence="1">The CCHC zinc fingers interact with the GGAG motif at the 3' end of let-7 miRNAs precursors, more generally they bind the 5'-NGNNG-3' consensus motif with micromolar affinity. The CSD domain recognizes the loop at the 5' end. The flexible linker allows accommodating variable sequences and lengths among let-7 family members (By similarity).</text>
</comment>
<comment type="similarity">
    <text evidence="7">Belongs to the lin-28 family.</text>
</comment>
<feature type="chain" id="PRO_0000253791" description="Protein lin-28 homolog A">
    <location>
        <begin position="1"/>
        <end position="195"/>
    </location>
</feature>
<feature type="domain" description="CSD">
    <location>
        <begin position="33"/>
        <end position="106"/>
    </location>
</feature>
<feature type="zinc finger region" description="CCHC-type 1" evidence="4">
    <location>
        <begin position="131"/>
        <end position="148"/>
    </location>
</feature>
<feature type="zinc finger region" description="CCHC-type 2" evidence="4">
    <location>
        <begin position="153"/>
        <end position="170"/>
    </location>
</feature>
<feature type="region of interest" description="Disordered" evidence="5">
    <location>
        <begin position="98"/>
        <end position="127"/>
    </location>
</feature>
<feature type="region of interest" description="Flexible linker" evidence="1">
    <location>
        <begin position="107"/>
        <end position="130"/>
    </location>
</feature>
<feature type="compositionally biased region" description="Basic residues" evidence="5">
    <location>
        <begin position="118"/>
        <end position="127"/>
    </location>
</feature>
<feature type="binding site" evidence="1">
    <location>
        <position position="133"/>
    </location>
    <ligand>
        <name>Zn(2+)</name>
        <dbReference type="ChEBI" id="CHEBI:29105"/>
        <label>1</label>
    </ligand>
</feature>
<feature type="binding site" evidence="1">
    <location>
        <position position="136"/>
    </location>
    <ligand>
        <name>Zn(2+)</name>
        <dbReference type="ChEBI" id="CHEBI:29105"/>
        <label>1</label>
    </ligand>
</feature>
<feature type="binding site" evidence="1">
    <location>
        <position position="141"/>
    </location>
    <ligand>
        <name>Zn(2+)</name>
        <dbReference type="ChEBI" id="CHEBI:29105"/>
        <label>1</label>
    </ligand>
</feature>
<feature type="binding site" evidence="1">
    <location>
        <position position="146"/>
    </location>
    <ligand>
        <name>Zn(2+)</name>
        <dbReference type="ChEBI" id="CHEBI:29105"/>
        <label>1</label>
    </ligand>
</feature>
<feature type="binding site" evidence="1">
    <location>
        <position position="155"/>
    </location>
    <ligand>
        <name>Zn(2+)</name>
        <dbReference type="ChEBI" id="CHEBI:29105"/>
        <label>2</label>
    </ligand>
</feature>
<feature type="binding site" evidence="1">
    <location>
        <position position="158"/>
    </location>
    <ligand>
        <name>Zn(2+)</name>
        <dbReference type="ChEBI" id="CHEBI:29105"/>
        <label>2</label>
    </ligand>
</feature>
<feature type="binding site" evidence="1">
    <location>
        <position position="163"/>
    </location>
    <ligand>
        <name>Zn(2+)</name>
        <dbReference type="ChEBI" id="CHEBI:29105"/>
        <label>2</label>
    </ligand>
</feature>
<feature type="binding site" evidence="1">
    <location>
        <position position="168"/>
    </location>
    <ligand>
        <name>Zn(2+)</name>
        <dbReference type="ChEBI" id="CHEBI:29105"/>
        <label>2</label>
    </ligand>
</feature>
<proteinExistence type="evidence at transcript level"/>